<dbReference type="EMBL" id="X79227">
    <property type="protein sequence ID" value="CAA55809.1"/>
    <property type="molecule type" value="mRNA"/>
</dbReference>
<dbReference type="PIR" id="JC5781">
    <property type="entry name" value="S45017"/>
</dbReference>
<dbReference type="SMR" id="P48647"/>
<dbReference type="GO" id="GO:0005212">
    <property type="term" value="F:structural constituent of eye lens"/>
    <property type="evidence" value="ECO:0007669"/>
    <property type="project" value="UniProtKB-KW"/>
</dbReference>
<dbReference type="GO" id="GO:0002088">
    <property type="term" value="P:lens development in camera-type eye"/>
    <property type="evidence" value="ECO:0007669"/>
    <property type="project" value="TreeGrafter"/>
</dbReference>
<dbReference type="GO" id="GO:0007601">
    <property type="term" value="P:visual perception"/>
    <property type="evidence" value="ECO:0007669"/>
    <property type="project" value="TreeGrafter"/>
</dbReference>
<dbReference type="FunFam" id="2.60.20.10:FF:000001">
    <property type="entry name" value="Crystallin gamma S"/>
    <property type="match status" value="1"/>
</dbReference>
<dbReference type="FunFam" id="2.60.20.10:FF:000003">
    <property type="entry name" value="Crystallin gamma S"/>
    <property type="match status" value="1"/>
</dbReference>
<dbReference type="Gene3D" id="2.60.20.10">
    <property type="entry name" value="Crystallins"/>
    <property type="match status" value="2"/>
</dbReference>
<dbReference type="InterPro" id="IPR050252">
    <property type="entry name" value="Beta/Gamma-Crystallin"/>
</dbReference>
<dbReference type="InterPro" id="IPR001064">
    <property type="entry name" value="Beta/gamma_crystallin"/>
</dbReference>
<dbReference type="InterPro" id="IPR011024">
    <property type="entry name" value="G_crystallin-like"/>
</dbReference>
<dbReference type="PANTHER" id="PTHR11818">
    <property type="entry name" value="BETA/GAMMA CRYSTALLIN"/>
    <property type="match status" value="1"/>
</dbReference>
<dbReference type="PANTHER" id="PTHR11818:SF107">
    <property type="entry name" value="CRYGMX PROTEIN"/>
    <property type="match status" value="1"/>
</dbReference>
<dbReference type="Pfam" id="PF00030">
    <property type="entry name" value="Crystall"/>
    <property type="match status" value="2"/>
</dbReference>
<dbReference type="PRINTS" id="PR01367">
    <property type="entry name" value="BGCRYSTALLIN"/>
</dbReference>
<dbReference type="SMART" id="SM00247">
    <property type="entry name" value="XTALbg"/>
    <property type="match status" value="2"/>
</dbReference>
<dbReference type="SUPFAM" id="SSF49695">
    <property type="entry name" value="gamma-Crystallin-like"/>
    <property type="match status" value="1"/>
</dbReference>
<dbReference type="PROSITE" id="PS50915">
    <property type="entry name" value="CRYSTALLIN_BETA_GAMMA"/>
    <property type="match status" value="4"/>
</dbReference>
<protein>
    <recommendedName>
        <fullName>Gamma-crystallin S-2</fullName>
    </recommendedName>
    <alternativeName>
        <fullName>Beta-crystallin S-2</fullName>
    </alternativeName>
</protein>
<evidence type="ECO:0000250" key="1"/>
<evidence type="ECO:0000255" key="2">
    <source>
        <dbReference type="PROSITE-ProRule" id="PRU00028"/>
    </source>
</evidence>
<evidence type="ECO:0000305" key="3"/>
<proteinExistence type="evidence at transcript level"/>
<reference key="1">
    <citation type="journal article" date="1997" name="Biochem. Biophys. Res. Commun.">
        <title>Characterization of gamma S-crystallin isoforms from lip shark (Chiloscyllium colax): evolutionary comparison between gamma S and beta/gamma crystallins.</title>
        <authorList>
            <person name="Pan F.-M."/>
            <person name="Chuang M.-H."/>
            <person name="Chiou S.-H."/>
        </authorList>
    </citation>
    <scope>NUCLEOTIDE SEQUENCE [MRNA]</scope>
    <source>
        <tissue>Lens</tissue>
    </source>
</reference>
<feature type="initiator methionine" description="Removed" evidence="1">
    <location>
        <position position="1"/>
    </location>
</feature>
<feature type="chain" id="PRO_0000057569" description="Gamma-crystallin S-2">
    <location>
        <begin position="2"/>
        <end position="173"/>
    </location>
</feature>
<feature type="domain" description="Beta/gamma crystallin 'Greek key' 1" evidence="2">
    <location>
        <begin position="2"/>
        <end position="40"/>
    </location>
</feature>
<feature type="domain" description="Beta/gamma crystallin 'Greek key' 2" evidence="2">
    <location>
        <begin position="41"/>
        <end position="83"/>
    </location>
</feature>
<feature type="domain" description="Beta/gamma crystallin 'Greek key' 3" evidence="2">
    <location>
        <begin position="89"/>
        <end position="129"/>
    </location>
</feature>
<feature type="domain" description="Beta/gamma crystallin 'Greek key' 4" evidence="2">
    <location>
        <begin position="130"/>
        <end position="172"/>
    </location>
</feature>
<feature type="region of interest" description="Connecting peptide">
    <location>
        <begin position="84"/>
        <end position="88"/>
    </location>
</feature>
<keyword id="KW-0273">Eye lens protein</keyword>
<keyword id="KW-0677">Repeat</keyword>
<accession>P48647</accession>
<name>CRGS2_CHIID</name>
<comment type="function">
    <text>Crystallins are the dominant structural components of the vertebrate eye lens.</text>
</comment>
<comment type="domain">
    <text>Has a two-domain beta-structure, folded into four very similar Greek key motifs.</text>
</comment>
<comment type="similarity">
    <text evidence="3">Belongs to the beta/gamma-crystallin family.</text>
</comment>
<gene>
    <name type="primary">GS-2</name>
</gene>
<organism>
    <name type="scientific">Chiloscyllium indicum</name>
    <name type="common">Slender bamboo shark</name>
    <name type="synonym">Chiloscyllium colax</name>
    <dbReference type="NCBI Taxonomy" id="443761"/>
    <lineage>
        <taxon>Eukaryota</taxon>
        <taxon>Metazoa</taxon>
        <taxon>Chordata</taxon>
        <taxon>Craniata</taxon>
        <taxon>Vertebrata</taxon>
        <taxon>Chondrichthyes</taxon>
        <taxon>Elasmobranchii</taxon>
        <taxon>Galeomorphii</taxon>
        <taxon>Galeoidea</taxon>
        <taxon>Orectolobiformes</taxon>
        <taxon>Hemiscylliidae</taxon>
        <taxon>Chiloscyllium</taxon>
    </lineage>
</organism>
<sequence length="173" mass="21245">MGKIIFYEDRNFQGRNYECSSDCADLSPYFSRCNSIRVESDWWVLYEKPNYMGYQHVLTRGEYPDYQRWMGFNDCVRSCRVPTHTQRPYRMRIYERPDFGGQMMEFMDVCPSVYDRFRYRDIHSSHVMGAYWIFYEHPNYRGRLYFMRPGEYRRYSDWGGYSSTIGSFRRIME</sequence>